<dbReference type="EC" id="4.2.1.59" evidence="1"/>
<dbReference type="EMBL" id="CP000736">
    <property type="protein sequence ID" value="ABR53002.1"/>
    <property type="molecule type" value="Genomic_DNA"/>
</dbReference>
<dbReference type="SMR" id="A6U3I4"/>
<dbReference type="KEGG" id="sah:SaurJH1_2173"/>
<dbReference type="HOGENOM" id="CLU_078912_3_0_9"/>
<dbReference type="GO" id="GO:0005737">
    <property type="term" value="C:cytoplasm"/>
    <property type="evidence" value="ECO:0007669"/>
    <property type="project" value="UniProtKB-SubCell"/>
</dbReference>
<dbReference type="GO" id="GO:0016020">
    <property type="term" value="C:membrane"/>
    <property type="evidence" value="ECO:0007669"/>
    <property type="project" value="GOC"/>
</dbReference>
<dbReference type="GO" id="GO:0019171">
    <property type="term" value="F:(3R)-hydroxyacyl-[acyl-carrier-protein] dehydratase activity"/>
    <property type="evidence" value="ECO:0007669"/>
    <property type="project" value="UniProtKB-EC"/>
</dbReference>
<dbReference type="GO" id="GO:0006633">
    <property type="term" value="P:fatty acid biosynthetic process"/>
    <property type="evidence" value="ECO:0007669"/>
    <property type="project" value="UniProtKB-UniRule"/>
</dbReference>
<dbReference type="GO" id="GO:0009245">
    <property type="term" value="P:lipid A biosynthetic process"/>
    <property type="evidence" value="ECO:0007669"/>
    <property type="project" value="UniProtKB-UniRule"/>
</dbReference>
<dbReference type="CDD" id="cd01288">
    <property type="entry name" value="FabZ"/>
    <property type="match status" value="1"/>
</dbReference>
<dbReference type="FunFam" id="3.10.129.10:FF:000001">
    <property type="entry name" value="3-hydroxyacyl-[acyl-carrier-protein] dehydratase FabZ"/>
    <property type="match status" value="1"/>
</dbReference>
<dbReference type="Gene3D" id="3.10.129.10">
    <property type="entry name" value="Hotdog Thioesterase"/>
    <property type="match status" value="1"/>
</dbReference>
<dbReference type="HAMAP" id="MF_00406">
    <property type="entry name" value="FabZ"/>
    <property type="match status" value="1"/>
</dbReference>
<dbReference type="InterPro" id="IPR013114">
    <property type="entry name" value="FabA_FabZ"/>
</dbReference>
<dbReference type="InterPro" id="IPR010084">
    <property type="entry name" value="FabZ"/>
</dbReference>
<dbReference type="InterPro" id="IPR029069">
    <property type="entry name" value="HotDog_dom_sf"/>
</dbReference>
<dbReference type="NCBIfam" id="TIGR01750">
    <property type="entry name" value="fabZ"/>
    <property type="match status" value="1"/>
</dbReference>
<dbReference type="NCBIfam" id="NF000582">
    <property type="entry name" value="PRK00006.1"/>
    <property type="match status" value="1"/>
</dbReference>
<dbReference type="PANTHER" id="PTHR30272">
    <property type="entry name" value="3-HYDROXYACYL-[ACYL-CARRIER-PROTEIN] DEHYDRATASE"/>
    <property type="match status" value="1"/>
</dbReference>
<dbReference type="PANTHER" id="PTHR30272:SF1">
    <property type="entry name" value="3-HYDROXYACYL-[ACYL-CARRIER-PROTEIN] DEHYDRATASE"/>
    <property type="match status" value="1"/>
</dbReference>
<dbReference type="Pfam" id="PF07977">
    <property type="entry name" value="FabA"/>
    <property type="match status" value="1"/>
</dbReference>
<dbReference type="SUPFAM" id="SSF54637">
    <property type="entry name" value="Thioesterase/thiol ester dehydrase-isomerase"/>
    <property type="match status" value="1"/>
</dbReference>
<gene>
    <name evidence="1" type="primary">fabZ</name>
    <name type="ordered locus">SaurJH1_2173</name>
</gene>
<evidence type="ECO:0000255" key="1">
    <source>
        <dbReference type="HAMAP-Rule" id="MF_00406"/>
    </source>
</evidence>
<reference key="1">
    <citation type="submission" date="2007-06" db="EMBL/GenBank/DDBJ databases">
        <title>Complete sequence of chromosome of Staphylococcus aureus subsp. aureus JH1.</title>
        <authorList>
            <consortium name="US DOE Joint Genome Institute"/>
            <person name="Copeland A."/>
            <person name="Lucas S."/>
            <person name="Lapidus A."/>
            <person name="Barry K."/>
            <person name="Detter J.C."/>
            <person name="Glavina del Rio T."/>
            <person name="Hammon N."/>
            <person name="Israni S."/>
            <person name="Dalin E."/>
            <person name="Tice H."/>
            <person name="Pitluck S."/>
            <person name="Chain P."/>
            <person name="Malfatti S."/>
            <person name="Shin M."/>
            <person name="Vergez L."/>
            <person name="Schmutz J."/>
            <person name="Larimer F."/>
            <person name="Land M."/>
            <person name="Hauser L."/>
            <person name="Kyrpides N."/>
            <person name="Ivanova N."/>
            <person name="Tomasz A."/>
            <person name="Richardson P."/>
        </authorList>
    </citation>
    <scope>NUCLEOTIDE SEQUENCE [LARGE SCALE GENOMIC DNA]</scope>
    <source>
        <strain>JH1</strain>
    </source>
</reference>
<feature type="chain" id="PRO_1000080453" description="3-hydroxyacyl-[acyl-carrier-protein] dehydratase FabZ">
    <location>
        <begin position="1"/>
        <end position="146"/>
    </location>
</feature>
<feature type="active site" evidence="1">
    <location>
        <position position="51"/>
    </location>
</feature>
<sequence>METIFDYNQIKQIIPHRQPFLLIDKVVEYEEGQRCVAIKQVSGNEPFFQGHFPEYAVMPGVLITEALAQTGAVAILNSEENKGKIALFAGIDKCRFKRQVVPGDTLTLEVEITKIKGPIGKGNAKATVDGQLACSCELTFAIQDVK</sequence>
<accession>A6U3I4</accession>
<protein>
    <recommendedName>
        <fullName evidence="1">3-hydroxyacyl-[acyl-carrier-protein] dehydratase FabZ</fullName>
        <ecNumber evidence="1">4.2.1.59</ecNumber>
    </recommendedName>
    <alternativeName>
        <fullName evidence="1">(3R)-hydroxymyristoyl-[acyl-carrier-protein] dehydratase</fullName>
        <shortName evidence="1">(3R)-hydroxymyristoyl-ACP dehydrase</shortName>
    </alternativeName>
    <alternativeName>
        <fullName evidence="1">Beta-hydroxyacyl-ACP dehydratase</fullName>
    </alternativeName>
</protein>
<organism>
    <name type="scientific">Staphylococcus aureus (strain JH1)</name>
    <dbReference type="NCBI Taxonomy" id="359787"/>
    <lineage>
        <taxon>Bacteria</taxon>
        <taxon>Bacillati</taxon>
        <taxon>Bacillota</taxon>
        <taxon>Bacilli</taxon>
        <taxon>Bacillales</taxon>
        <taxon>Staphylococcaceae</taxon>
        <taxon>Staphylococcus</taxon>
    </lineage>
</organism>
<comment type="function">
    <text evidence="1">Involved in unsaturated fatty acids biosynthesis. Catalyzes the dehydration of short chain beta-hydroxyacyl-ACPs and long chain saturated and unsaturated beta-hydroxyacyl-ACPs.</text>
</comment>
<comment type="catalytic activity">
    <reaction evidence="1">
        <text>a (3R)-hydroxyacyl-[ACP] = a (2E)-enoyl-[ACP] + H2O</text>
        <dbReference type="Rhea" id="RHEA:13097"/>
        <dbReference type="Rhea" id="RHEA-COMP:9925"/>
        <dbReference type="Rhea" id="RHEA-COMP:9945"/>
        <dbReference type="ChEBI" id="CHEBI:15377"/>
        <dbReference type="ChEBI" id="CHEBI:78784"/>
        <dbReference type="ChEBI" id="CHEBI:78827"/>
        <dbReference type="EC" id="4.2.1.59"/>
    </reaction>
</comment>
<comment type="subcellular location">
    <subcellularLocation>
        <location evidence="1">Cytoplasm</location>
    </subcellularLocation>
</comment>
<comment type="similarity">
    <text evidence="1">Belongs to the thioester dehydratase family. FabZ subfamily.</text>
</comment>
<name>FABZ_STAA2</name>
<keyword id="KW-0963">Cytoplasm</keyword>
<keyword id="KW-0441">Lipid A biosynthesis</keyword>
<keyword id="KW-0444">Lipid biosynthesis</keyword>
<keyword id="KW-0443">Lipid metabolism</keyword>
<keyword id="KW-0456">Lyase</keyword>
<proteinExistence type="inferred from homology"/>